<dbReference type="EC" id="7.-.-.-" evidence="1"/>
<dbReference type="EMBL" id="BA000034">
    <property type="protein sequence ID" value="BAC64937.1"/>
    <property type="status" value="ALT_INIT"/>
    <property type="molecule type" value="Genomic_DNA"/>
</dbReference>
<dbReference type="RefSeq" id="WP_002992388.1">
    <property type="nucleotide sequence ID" value="NC_004606.1"/>
</dbReference>
<dbReference type="SMR" id="P0CZ29"/>
<dbReference type="KEGG" id="sps:SPs1842"/>
<dbReference type="HOGENOM" id="CLU_000604_1_22_9"/>
<dbReference type="GO" id="GO:0043190">
    <property type="term" value="C:ATP-binding cassette (ABC) transporter complex"/>
    <property type="evidence" value="ECO:0007669"/>
    <property type="project" value="TreeGrafter"/>
</dbReference>
<dbReference type="GO" id="GO:0005524">
    <property type="term" value="F:ATP binding"/>
    <property type="evidence" value="ECO:0007669"/>
    <property type="project" value="UniProtKB-KW"/>
</dbReference>
<dbReference type="GO" id="GO:0016887">
    <property type="term" value="F:ATP hydrolysis activity"/>
    <property type="evidence" value="ECO:0007669"/>
    <property type="project" value="InterPro"/>
</dbReference>
<dbReference type="GO" id="GO:0042626">
    <property type="term" value="F:ATPase-coupled transmembrane transporter activity"/>
    <property type="evidence" value="ECO:0007669"/>
    <property type="project" value="TreeGrafter"/>
</dbReference>
<dbReference type="CDD" id="cd03225">
    <property type="entry name" value="ABC_cobalt_CbiO_domain1"/>
    <property type="match status" value="1"/>
</dbReference>
<dbReference type="FunFam" id="3.40.50.300:FF:000224">
    <property type="entry name" value="Energy-coupling factor transporter ATP-binding protein EcfA"/>
    <property type="match status" value="1"/>
</dbReference>
<dbReference type="Gene3D" id="3.40.50.300">
    <property type="entry name" value="P-loop containing nucleotide triphosphate hydrolases"/>
    <property type="match status" value="1"/>
</dbReference>
<dbReference type="InterPro" id="IPR003593">
    <property type="entry name" value="AAA+_ATPase"/>
</dbReference>
<dbReference type="InterPro" id="IPR003439">
    <property type="entry name" value="ABC_transporter-like_ATP-bd"/>
</dbReference>
<dbReference type="InterPro" id="IPR017871">
    <property type="entry name" value="ABC_transporter-like_CS"/>
</dbReference>
<dbReference type="InterPro" id="IPR015856">
    <property type="entry name" value="ABC_transpr_CbiO/EcfA_su"/>
</dbReference>
<dbReference type="InterPro" id="IPR050095">
    <property type="entry name" value="ECF_ABC_transporter_ATP-bd"/>
</dbReference>
<dbReference type="InterPro" id="IPR030947">
    <property type="entry name" value="EcfA_1"/>
</dbReference>
<dbReference type="InterPro" id="IPR027417">
    <property type="entry name" value="P-loop_NTPase"/>
</dbReference>
<dbReference type="NCBIfam" id="TIGR04520">
    <property type="entry name" value="ECF_ATPase_1"/>
    <property type="match status" value="1"/>
</dbReference>
<dbReference type="NCBIfam" id="NF010156">
    <property type="entry name" value="PRK13635.1"/>
    <property type="match status" value="1"/>
</dbReference>
<dbReference type="NCBIfam" id="NF010167">
    <property type="entry name" value="PRK13648.1"/>
    <property type="match status" value="1"/>
</dbReference>
<dbReference type="PANTHER" id="PTHR43553:SF24">
    <property type="entry name" value="ENERGY-COUPLING FACTOR TRANSPORTER ATP-BINDING PROTEIN ECFA1"/>
    <property type="match status" value="1"/>
</dbReference>
<dbReference type="PANTHER" id="PTHR43553">
    <property type="entry name" value="HEAVY METAL TRANSPORTER"/>
    <property type="match status" value="1"/>
</dbReference>
<dbReference type="Pfam" id="PF00005">
    <property type="entry name" value="ABC_tran"/>
    <property type="match status" value="1"/>
</dbReference>
<dbReference type="SMART" id="SM00382">
    <property type="entry name" value="AAA"/>
    <property type="match status" value="1"/>
</dbReference>
<dbReference type="SUPFAM" id="SSF52540">
    <property type="entry name" value="P-loop containing nucleoside triphosphate hydrolases"/>
    <property type="match status" value="1"/>
</dbReference>
<dbReference type="PROSITE" id="PS00211">
    <property type="entry name" value="ABC_TRANSPORTER_1"/>
    <property type="match status" value="1"/>
</dbReference>
<dbReference type="PROSITE" id="PS50893">
    <property type="entry name" value="ABC_TRANSPORTER_2"/>
    <property type="match status" value="1"/>
</dbReference>
<dbReference type="PROSITE" id="PS51246">
    <property type="entry name" value="CBIO"/>
    <property type="match status" value="1"/>
</dbReference>
<feature type="chain" id="PRO_0000411252" description="Energy-coupling factor transporter ATP-binding protein EcfA1">
    <location>
        <begin position="1"/>
        <end position="279"/>
    </location>
</feature>
<feature type="domain" description="ABC transporter" evidence="1">
    <location>
        <begin position="5"/>
        <end position="240"/>
    </location>
</feature>
<feature type="binding site" evidence="1">
    <location>
        <begin position="40"/>
        <end position="47"/>
    </location>
    <ligand>
        <name>ATP</name>
        <dbReference type="ChEBI" id="CHEBI:30616"/>
    </ligand>
</feature>
<organism>
    <name type="scientific">Streptococcus pyogenes serotype M3 (strain SSI-1)</name>
    <dbReference type="NCBI Taxonomy" id="193567"/>
    <lineage>
        <taxon>Bacteria</taxon>
        <taxon>Bacillati</taxon>
        <taxon>Bacillota</taxon>
        <taxon>Bacilli</taxon>
        <taxon>Lactobacillales</taxon>
        <taxon>Streptococcaceae</taxon>
        <taxon>Streptococcus</taxon>
    </lineage>
</organism>
<comment type="function">
    <text evidence="1">ATP-binding (A) component of a common energy-coupling factor (ECF) ABC-transporter complex. Unlike classic ABC transporters this ECF transporter provides the energy necessary to transport a number of different substrates.</text>
</comment>
<comment type="subunit">
    <text evidence="1">Forms a stable energy-coupling factor (ECF) transporter complex composed of 2 membrane-embedded substrate-binding proteins (S component), 2 ATP-binding proteins (A component) and 2 transmembrane proteins (T component).</text>
</comment>
<comment type="subcellular location">
    <subcellularLocation>
        <location evidence="1">Cell membrane</location>
        <topology evidence="1">Peripheral membrane protein</topology>
    </subcellularLocation>
</comment>
<comment type="similarity">
    <text evidence="1">Belongs to the ABC transporter superfamily. Energy-coupling factor EcfA family.</text>
</comment>
<comment type="sequence caution" evidence="2">
    <conflict type="erroneous initiation">
        <sequence resource="EMBL-CDS" id="BAC64937"/>
    </conflict>
    <text>Extended N-terminus.</text>
</comment>
<keyword id="KW-0067">ATP-binding</keyword>
<keyword id="KW-1003">Cell membrane</keyword>
<keyword id="KW-0472">Membrane</keyword>
<keyword id="KW-0547">Nucleotide-binding</keyword>
<keyword id="KW-1278">Translocase</keyword>
<keyword id="KW-0813">Transport</keyword>
<reference key="1">
    <citation type="journal article" date="2003" name="Genome Res.">
        <title>Genome sequence of an M3 strain of Streptococcus pyogenes reveals a large-scale genomic rearrangement in invasive strains and new insights into phage evolution.</title>
        <authorList>
            <person name="Nakagawa I."/>
            <person name="Kurokawa K."/>
            <person name="Yamashita A."/>
            <person name="Nakata M."/>
            <person name="Tomiyasu Y."/>
            <person name="Okahashi N."/>
            <person name="Kawabata S."/>
            <person name="Yamazaki K."/>
            <person name="Shiba T."/>
            <person name="Yasunaga T."/>
            <person name="Hayashi H."/>
            <person name="Hattori M."/>
            <person name="Hamada S."/>
        </authorList>
    </citation>
    <scope>NUCLEOTIDE SEQUENCE [LARGE SCALE GENOMIC DNA]</scope>
    <source>
        <strain>SSI-1</strain>
    </source>
</reference>
<name>ECFA1_STRPQ</name>
<accession>P0CZ29</accession>
<accession>Q877W5</accession>
<accession>Q8K5H1</accession>
<protein>
    <recommendedName>
        <fullName evidence="1">Energy-coupling factor transporter ATP-binding protein EcfA1</fullName>
        <shortName evidence="1">ECF transporter A component EcfA1</shortName>
        <ecNumber evidence="1">7.-.-.-</ecNumber>
    </recommendedName>
</protein>
<sequence>MSAIIELKKVTFNYHKDQEKPTLDGVSFHVKQGEWLSIIGHNGSGKSTTIRLIDGLLEPESGSIIVDGDLLTITNVWEIRHKIGMVFQNPDNQFVGATVEDDVAFGLENKGIAHEDIKERVNHALELVGMQNFKEKEPARLSGGQKQRVAIAGAVAMKPKIIILDEATSMLDPKGRLELIKTIKNIRDDYQLTVISITHDLDEVALSDRVLVMKDGQVESTSTPEQLFARGDELLQLGLDIPFTTSVVQMLQEEGYPIDYGYLTEKELENQLCQLISKM</sequence>
<evidence type="ECO:0000255" key="1">
    <source>
        <dbReference type="HAMAP-Rule" id="MF_01710"/>
    </source>
</evidence>
<evidence type="ECO:0000305" key="2"/>
<proteinExistence type="inferred from homology"/>
<gene>
    <name evidence="1" type="primary">ecfA1</name>
    <name type="synonym">cbiO1</name>
    <name type="ordered locus">SPs1842</name>
</gene>